<reference key="1">
    <citation type="submission" date="1999-03" db="EMBL/GenBank/DDBJ databases">
        <title>Isolation of the Staphylococcus aureus ribonucleotide reductase operon.</title>
        <authorList>
            <person name="Morrissey J.A."/>
            <person name="Williams P."/>
        </authorList>
    </citation>
    <scope>NUCLEOTIDE SEQUENCE [GENOMIC DNA]</scope>
    <source>
        <strain>BB</strain>
    </source>
</reference>
<reference key="2">
    <citation type="journal article" date="2001" name="J. Bacteriol.">
        <title>Analysis of transcription of the Staphylococcus aureus aerobic class Ib and anaerobic class III ribonucleotide reductase genes in response to oxygen.</title>
        <authorList>
            <person name="Masalha M."/>
            <person name="Borovok I."/>
            <person name="Schreiber R."/>
            <person name="Aharonowitz Y."/>
            <person name="Cohen G."/>
        </authorList>
    </citation>
    <scope>NUCLEOTIDE SEQUENCE [GENOMIC DNA]</scope>
    <source>
        <strain>ATCC 9144 / DSM 683 / NCIB 6571 / NCTC 6571 / NRRL B-314 / Oxford</strain>
    </source>
</reference>
<proteinExistence type="inferred from homology"/>
<sequence>MKIIYFSFTGNVRRFIKRTELENTLEITAENCMEPVHEPFIIVTGTIGFGEVPEPVQSFLEVNHQYIRGVAASGNRNWGLNFAKAGRTISEEYNVPLLMKFELHGKNKDVIEFKNKVGNFNENHGREKVQSY</sequence>
<name>NRDI_STAAU</name>
<organism>
    <name type="scientific">Staphylococcus aureus</name>
    <dbReference type="NCBI Taxonomy" id="1280"/>
    <lineage>
        <taxon>Bacteria</taxon>
        <taxon>Bacillati</taxon>
        <taxon>Bacillota</taxon>
        <taxon>Bacilli</taxon>
        <taxon>Bacillales</taxon>
        <taxon>Staphylococcaceae</taxon>
        <taxon>Staphylococcus</taxon>
    </lineage>
</organism>
<accession>P0C1S2</accession>
<accession>P68813</accession>
<accession>Q99VP3</accession>
<accession>Q9Z5C9</accession>
<comment type="function">
    <text evidence="1">Probably involved in ribonucleotide reductase function.</text>
</comment>
<comment type="similarity">
    <text evidence="2">Belongs to the NrdI family.</text>
</comment>
<feature type="chain" id="PRO_0000164339" description="Protein NrdI">
    <location>
        <begin position="1"/>
        <end position="132"/>
    </location>
</feature>
<feature type="sequence conflict" description="In Ref. 1; CAB38641." evidence="2" ref="1">
    <original>H</original>
    <variation>N</variation>
    <location>
        <position position="37"/>
    </location>
</feature>
<dbReference type="EMBL" id="AJ133495">
    <property type="protein sequence ID" value="CAB38641.1"/>
    <property type="molecule type" value="Genomic_DNA"/>
</dbReference>
<dbReference type="EMBL" id="AJ292927">
    <property type="protein sequence ID" value="CAC40666.1"/>
    <property type="molecule type" value="Genomic_DNA"/>
</dbReference>
<dbReference type="RefSeq" id="WP_000692521.1">
    <property type="nucleotide sequence ID" value="NZ_WYDB01000004.1"/>
</dbReference>
<dbReference type="RefSeq" id="WP_000692523.1">
    <property type="nucleotide sequence ID" value="NZ_WOCY01000002.1"/>
</dbReference>
<dbReference type="SMR" id="P0C1S2"/>
<dbReference type="GO" id="GO:0010181">
    <property type="term" value="F:FMN binding"/>
    <property type="evidence" value="ECO:0007669"/>
    <property type="project" value="InterPro"/>
</dbReference>
<dbReference type="GO" id="GO:0036211">
    <property type="term" value="P:protein modification process"/>
    <property type="evidence" value="ECO:0007669"/>
    <property type="project" value="InterPro"/>
</dbReference>
<dbReference type="Gene3D" id="3.40.50.360">
    <property type="match status" value="1"/>
</dbReference>
<dbReference type="HAMAP" id="MF_00128">
    <property type="entry name" value="NrdI"/>
    <property type="match status" value="1"/>
</dbReference>
<dbReference type="InterPro" id="IPR029039">
    <property type="entry name" value="Flavoprotein-like_sf"/>
</dbReference>
<dbReference type="InterPro" id="IPR020852">
    <property type="entry name" value="RNR_Ib_NrdI_bac"/>
</dbReference>
<dbReference type="InterPro" id="IPR004465">
    <property type="entry name" value="RNR_NrdI"/>
</dbReference>
<dbReference type="NCBIfam" id="TIGR00333">
    <property type="entry name" value="nrdI"/>
    <property type="match status" value="1"/>
</dbReference>
<dbReference type="PANTHER" id="PTHR37297">
    <property type="entry name" value="PROTEIN NRDI"/>
    <property type="match status" value="1"/>
</dbReference>
<dbReference type="PANTHER" id="PTHR37297:SF1">
    <property type="entry name" value="PROTEIN NRDI"/>
    <property type="match status" value="1"/>
</dbReference>
<dbReference type="Pfam" id="PF07972">
    <property type="entry name" value="Flavodoxin_NdrI"/>
    <property type="match status" value="1"/>
</dbReference>
<dbReference type="PIRSF" id="PIRSF005087">
    <property type="entry name" value="NrdI"/>
    <property type="match status" value="1"/>
</dbReference>
<dbReference type="SUPFAM" id="SSF52218">
    <property type="entry name" value="Flavoproteins"/>
    <property type="match status" value="1"/>
</dbReference>
<gene>
    <name type="primary">nrdI</name>
</gene>
<protein>
    <recommendedName>
        <fullName>Protein NrdI</fullName>
    </recommendedName>
</protein>
<evidence type="ECO:0000250" key="1"/>
<evidence type="ECO:0000305" key="2"/>